<evidence type="ECO:0000255" key="1">
    <source>
        <dbReference type="HAMAP-Rule" id="MF_00072"/>
    </source>
</evidence>
<comment type="function">
    <text evidence="1">Increases the formation of ribosomal termination complexes and stimulates activities of RF-1 and RF-2. It binds guanine nucleotides and has strong preference for UGA stop codons. It may interact directly with the ribosome. The stimulation of RF-1 and RF-2 is significantly reduced by GTP and GDP, but not by GMP.</text>
</comment>
<comment type="subcellular location">
    <subcellularLocation>
        <location evidence="1">Cytoplasm</location>
    </subcellularLocation>
</comment>
<comment type="similarity">
    <text evidence="1">Belongs to the TRAFAC class translation factor GTPase superfamily. Classic translation factor GTPase family. PrfC subfamily.</text>
</comment>
<accession>Q6AJD2</accession>
<name>RF3_DESPS</name>
<sequence length="528" mass="59639">MSKQLEQEIAKRRTFGIISHPDAGKTTLTEKLLLFGGAINMAGAVKSRKIERKATSDWMAIEQERGISVTTSVMKFTYREHEINLLDTPGHQDFSEDTYRVLTAVDSAIMVIDSAKGVEAQTEKLMEVCRMRNTPIITFINKLDREGMHPLDIMADIEDKLQIECAPLSWPIGMGKDFKGVYNIYQKRLHLFTPGTESIDGQGQMIEDLDDPLLDELLGRQAVELREDLELLAGAATPLEYDQYLSATQSPVFFGSAVNNFGVQEMLDAFIDMAPAPGPRMAVSREVLPSEENFSGFVFKIQANMDPAHRDRIAFFRICSGKFTRGMKVHHHRLGKDISLANATIFMAQERANVEEAWPGDIIGIHNHGTIKIGDTFSIKEPLKFTGIPNFAPEHFRRVILKNPLKMKQLQKGLIQLAEEGAIQVFRPIIGADYIMGAVGVLQFEVTMARLKNEYSVDAIYEPISYQAARWVSCEDKKALAEFEKKNQSTLARDSEGFLTHLAQSDWMLNFFMEKWPNIDFHKTRENI</sequence>
<feature type="chain" id="PRO_0000242173" description="Peptide chain release factor 3">
    <location>
        <begin position="1"/>
        <end position="528"/>
    </location>
</feature>
<feature type="domain" description="tr-type G">
    <location>
        <begin position="10"/>
        <end position="280"/>
    </location>
</feature>
<feature type="binding site" evidence="1">
    <location>
        <begin position="19"/>
        <end position="26"/>
    </location>
    <ligand>
        <name>GTP</name>
        <dbReference type="ChEBI" id="CHEBI:37565"/>
    </ligand>
</feature>
<feature type="binding site" evidence="1">
    <location>
        <begin position="87"/>
        <end position="91"/>
    </location>
    <ligand>
        <name>GTP</name>
        <dbReference type="ChEBI" id="CHEBI:37565"/>
    </ligand>
</feature>
<feature type="binding site" evidence="1">
    <location>
        <begin position="141"/>
        <end position="144"/>
    </location>
    <ligand>
        <name>GTP</name>
        <dbReference type="ChEBI" id="CHEBI:37565"/>
    </ligand>
</feature>
<gene>
    <name evidence="1" type="primary">prfC</name>
    <name type="ordered locus">DP2819</name>
</gene>
<reference key="1">
    <citation type="journal article" date="2004" name="Environ. Microbiol.">
        <title>The genome of Desulfotalea psychrophila, a sulfate-reducing bacterium from permanently cold Arctic sediments.</title>
        <authorList>
            <person name="Rabus R."/>
            <person name="Ruepp A."/>
            <person name="Frickey T."/>
            <person name="Rattei T."/>
            <person name="Fartmann B."/>
            <person name="Stark M."/>
            <person name="Bauer M."/>
            <person name="Zibat A."/>
            <person name="Lombardot T."/>
            <person name="Becker I."/>
            <person name="Amann J."/>
            <person name="Gellner K."/>
            <person name="Teeling H."/>
            <person name="Leuschner W.D."/>
            <person name="Gloeckner F.-O."/>
            <person name="Lupas A.N."/>
            <person name="Amann R."/>
            <person name="Klenk H.-P."/>
        </authorList>
    </citation>
    <scope>NUCLEOTIDE SEQUENCE [LARGE SCALE GENOMIC DNA]</scope>
    <source>
        <strain>DSM 12343 / LSv54</strain>
    </source>
</reference>
<dbReference type="EMBL" id="CR522870">
    <property type="protein sequence ID" value="CAG37548.1"/>
    <property type="molecule type" value="Genomic_DNA"/>
</dbReference>
<dbReference type="RefSeq" id="WP_011190060.1">
    <property type="nucleotide sequence ID" value="NC_006138.1"/>
</dbReference>
<dbReference type="SMR" id="Q6AJD2"/>
<dbReference type="STRING" id="177439.DP2819"/>
<dbReference type="KEGG" id="dps:DP2819"/>
<dbReference type="eggNOG" id="COG4108">
    <property type="taxonomic scope" value="Bacteria"/>
</dbReference>
<dbReference type="HOGENOM" id="CLU_002794_2_1_7"/>
<dbReference type="OrthoDB" id="9760518at2"/>
<dbReference type="Proteomes" id="UP000000602">
    <property type="component" value="Chromosome"/>
</dbReference>
<dbReference type="GO" id="GO:0005829">
    <property type="term" value="C:cytosol"/>
    <property type="evidence" value="ECO:0007669"/>
    <property type="project" value="TreeGrafter"/>
</dbReference>
<dbReference type="GO" id="GO:0005525">
    <property type="term" value="F:GTP binding"/>
    <property type="evidence" value="ECO:0007669"/>
    <property type="project" value="UniProtKB-UniRule"/>
</dbReference>
<dbReference type="GO" id="GO:0003924">
    <property type="term" value="F:GTPase activity"/>
    <property type="evidence" value="ECO:0007669"/>
    <property type="project" value="InterPro"/>
</dbReference>
<dbReference type="GO" id="GO:0016150">
    <property type="term" value="F:translation release factor activity, codon nonspecific"/>
    <property type="evidence" value="ECO:0007669"/>
    <property type="project" value="TreeGrafter"/>
</dbReference>
<dbReference type="GO" id="GO:0016149">
    <property type="term" value="F:translation release factor activity, codon specific"/>
    <property type="evidence" value="ECO:0007669"/>
    <property type="project" value="UniProtKB-UniRule"/>
</dbReference>
<dbReference type="GO" id="GO:0006449">
    <property type="term" value="P:regulation of translational termination"/>
    <property type="evidence" value="ECO:0007669"/>
    <property type="project" value="UniProtKB-UniRule"/>
</dbReference>
<dbReference type="CDD" id="cd04169">
    <property type="entry name" value="RF3"/>
    <property type="match status" value="1"/>
</dbReference>
<dbReference type="CDD" id="cd03689">
    <property type="entry name" value="RF3_II"/>
    <property type="match status" value="1"/>
</dbReference>
<dbReference type="CDD" id="cd16259">
    <property type="entry name" value="RF3_III"/>
    <property type="match status" value="1"/>
</dbReference>
<dbReference type="FunFam" id="2.40.30.10:FF:000040">
    <property type="entry name" value="Peptide chain release factor 3"/>
    <property type="match status" value="1"/>
</dbReference>
<dbReference type="FunFam" id="3.30.70.3280:FF:000001">
    <property type="entry name" value="Peptide chain release factor 3"/>
    <property type="match status" value="1"/>
</dbReference>
<dbReference type="FunFam" id="3.40.50.300:FF:000542">
    <property type="entry name" value="Peptide chain release factor 3"/>
    <property type="match status" value="1"/>
</dbReference>
<dbReference type="Gene3D" id="3.40.50.300">
    <property type="entry name" value="P-loop containing nucleotide triphosphate hydrolases"/>
    <property type="match status" value="2"/>
</dbReference>
<dbReference type="Gene3D" id="3.30.70.3280">
    <property type="entry name" value="Peptide chain release factor 3, domain III"/>
    <property type="match status" value="1"/>
</dbReference>
<dbReference type="HAMAP" id="MF_00072">
    <property type="entry name" value="Rel_fac_3"/>
    <property type="match status" value="1"/>
</dbReference>
<dbReference type="InterPro" id="IPR053905">
    <property type="entry name" value="EF-G-like_DII"/>
</dbReference>
<dbReference type="InterPro" id="IPR035647">
    <property type="entry name" value="EFG_III/V"/>
</dbReference>
<dbReference type="InterPro" id="IPR031157">
    <property type="entry name" value="G_TR_CS"/>
</dbReference>
<dbReference type="InterPro" id="IPR027417">
    <property type="entry name" value="P-loop_NTPase"/>
</dbReference>
<dbReference type="InterPro" id="IPR004548">
    <property type="entry name" value="PrfC"/>
</dbReference>
<dbReference type="InterPro" id="IPR032090">
    <property type="entry name" value="RF3_C"/>
</dbReference>
<dbReference type="InterPro" id="IPR038467">
    <property type="entry name" value="RF3_dom_3_sf"/>
</dbReference>
<dbReference type="InterPro" id="IPR041732">
    <property type="entry name" value="RF3_GTP-bd"/>
</dbReference>
<dbReference type="InterPro" id="IPR005225">
    <property type="entry name" value="Small_GTP-bd"/>
</dbReference>
<dbReference type="InterPro" id="IPR000795">
    <property type="entry name" value="T_Tr_GTP-bd_dom"/>
</dbReference>
<dbReference type="InterPro" id="IPR009000">
    <property type="entry name" value="Transl_B-barrel_sf"/>
</dbReference>
<dbReference type="NCBIfam" id="TIGR00503">
    <property type="entry name" value="prfC"/>
    <property type="match status" value="1"/>
</dbReference>
<dbReference type="NCBIfam" id="NF001964">
    <property type="entry name" value="PRK00741.1"/>
    <property type="match status" value="1"/>
</dbReference>
<dbReference type="NCBIfam" id="TIGR00231">
    <property type="entry name" value="small_GTP"/>
    <property type="match status" value="1"/>
</dbReference>
<dbReference type="PANTHER" id="PTHR43556">
    <property type="entry name" value="PEPTIDE CHAIN RELEASE FACTOR RF3"/>
    <property type="match status" value="1"/>
</dbReference>
<dbReference type="PANTHER" id="PTHR43556:SF2">
    <property type="entry name" value="PEPTIDE CHAIN RELEASE FACTOR RF3"/>
    <property type="match status" value="1"/>
</dbReference>
<dbReference type="Pfam" id="PF22042">
    <property type="entry name" value="EF-G_D2"/>
    <property type="match status" value="1"/>
</dbReference>
<dbReference type="Pfam" id="PF00009">
    <property type="entry name" value="GTP_EFTU"/>
    <property type="match status" value="1"/>
</dbReference>
<dbReference type="Pfam" id="PF16658">
    <property type="entry name" value="RF3_C"/>
    <property type="match status" value="1"/>
</dbReference>
<dbReference type="PRINTS" id="PR00315">
    <property type="entry name" value="ELONGATNFCT"/>
</dbReference>
<dbReference type="SUPFAM" id="SSF54980">
    <property type="entry name" value="EF-G C-terminal domain-like"/>
    <property type="match status" value="1"/>
</dbReference>
<dbReference type="SUPFAM" id="SSF52540">
    <property type="entry name" value="P-loop containing nucleoside triphosphate hydrolases"/>
    <property type="match status" value="1"/>
</dbReference>
<dbReference type="SUPFAM" id="SSF50447">
    <property type="entry name" value="Translation proteins"/>
    <property type="match status" value="1"/>
</dbReference>
<dbReference type="PROSITE" id="PS00301">
    <property type="entry name" value="G_TR_1"/>
    <property type="match status" value="1"/>
</dbReference>
<dbReference type="PROSITE" id="PS51722">
    <property type="entry name" value="G_TR_2"/>
    <property type="match status" value="1"/>
</dbReference>
<organism>
    <name type="scientific">Desulfotalea psychrophila (strain LSv54 / DSM 12343)</name>
    <dbReference type="NCBI Taxonomy" id="177439"/>
    <lineage>
        <taxon>Bacteria</taxon>
        <taxon>Pseudomonadati</taxon>
        <taxon>Thermodesulfobacteriota</taxon>
        <taxon>Desulfobulbia</taxon>
        <taxon>Desulfobulbales</taxon>
        <taxon>Desulfocapsaceae</taxon>
        <taxon>Desulfotalea</taxon>
    </lineage>
</organism>
<proteinExistence type="inferred from homology"/>
<keyword id="KW-0963">Cytoplasm</keyword>
<keyword id="KW-0342">GTP-binding</keyword>
<keyword id="KW-0547">Nucleotide-binding</keyword>
<keyword id="KW-0648">Protein biosynthesis</keyword>
<keyword id="KW-1185">Reference proteome</keyword>
<protein>
    <recommendedName>
        <fullName evidence="1">Peptide chain release factor 3</fullName>
        <shortName evidence="1">RF-3</shortName>
    </recommendedName>
</protein>